<protein>
    <recommendedName>
        <fullName evidence="1">Elongation factor Ts</fullName>
        <shortName evidence="1">EF-Ts</shortName>
    </recommendedName>
</protein>
<sequence length="308" mass="32231">MTEITAALVKELREKSGAGMMDCKKALIETNGDIEAAIDWLRAKGISKADKKSGRTAAEGLVAIAGAGHKAVVVELNSETDFVARNDAFQELVRGIAEVALSTDGTVEAISAATYPASGKPVADTIKDAIATIGENMTLRRAAKLEVEHGVVATYIHNAAGDGIGKLGVLVALKSVGDKAVLTSIGRQVAMHIAATNPLAIRAEEVDAAVAERERNVFIEQSRESGKPEAIIEKMVEGRMRKFFEEVALLSQAFVINPDLTVGAAIKEAEKTAGAAIEVVGMARLLLGEGVEKEEADFAAEVAAVAKG</sequence>
<keyword id="KW-0963">Cytoplasm</keyword>
<keyword id="KW-0251">Elongation factor</keyword>
<keyword id="KW-0648">Protein biosynthesis</keyword>
<proteinExistence type="inferred from homology"/>
<evidence type="ECO:0000255" key="1">
    <source>
        <dbReference type="HAMAP-Rule" id="MF_00050"/>
    </source>
</evidence>
<name>EFTS_RHIR8</name>
<dbReference type="EMBL" id="CP000628">
    <property type="protein sequence ID" value="ACM26462.1"/>
    <property type="molecule type" value="Genomic_DNA"/>
</dbReference>
<dbReference type="RefSeq" id="WP_007693408.1">
    <property type="nucleotide sequence ID" value="NC_011985.1"/>
</dbReference>
<dbReference type="SMR" id="B9JEX1"/>
<dbReference type="STRING" id="311403.Arad_2220"/>
<dbReference type="GeneID" id="86848356"/>
<dbReference type="KEGG" id="ara:Arad_2220"/>
<dbReference type="eggNOG" id="COG0264">
    <property type="taxonomic scope" value="Bacteria"/>
</dbReference>
<dbReference type="HOGENOM" id="CLU_047155_2_0_5"/>
<dbReference type="Proteomes" id="UP000001600">
    <property type="component" value="Chromosome 1"/>
</dbReference>
<dbReference type="GO" id="GO:0005737">
    <property type="term" value="C:cytoplasm"/>
    <property type="evidence" value="ECO:0007669"/>
    <property type="project" value="UniProtKB-SubCell"/>
</dbReference>
<dbReference type="GO" id="GO:0003746">
    <property type="term" value="F:translation elongation factor activity"/>
    <property type="evidence" value="ECO:0007669"/>
    <property type="project" value="UniProtKB-UniRule"/>
</dbReference>
<dbReference type="CDD" id="cd14275">
    <property type="entry name" value="UBA_EF-Ts"/>
    <property type="match status" value="1"/>
</dbReference>
<dbReference type="FunFam" id="1.10.286.20:FF:000001">
    <property type="entry name" value="Elongation factor Ts"/>
    <property type="match status" value="1"/>
</dbReference>
<dbReference type="FunFam" id="1.10.8.10:FF:000001">
    <property type="entry name" value="Elongation factor Ts"/>
    <property type="match status" value="1"/>
</dbReference>
<dbReference type="Gene3D" id="1.10.286.20">
    <property type="match status" value="1"/>
</dbReference>
<dbReference type="Gene3D" id="1.10.8.10">
    <property type="entry name" value="DNA helicase RuvA subunit, C-terminal domain"/>
    <property type="match status" value="1"/>
</dbReference>
<dbReference type="Gene3D" id="3.30.479.20">
    <property type="entry name" value="Elongation factor Ts, dimerisation domain"/>
    <property type="match status" value="2"/>
</dbReference>
<dbReference type="HAMAP" id="MF_00050">
    <property type="entry name" value="EF_Ts"/>
    <property type="match status" value="1"/>
</dbReference>
<dbReference type="InterPro" id="IPR036402">
    <property type="entry name" value="EF-Ts_dimer_sf"/>
</dbReference>
<dbReference type="InterPro" id="IPR001816">
    <property type="entry name" value="Transl_elong_EFTs/EF1B"/>
</dbReference>
<dbReference type="InterPro" id="IPR014039">
    <property type="entry name" value="Transl_elong_EFTs/EF1B_dimer"/>
</dbReference>
<dbReference type="InterPro" id="IPR018101">
    <property type="entry name" value="Transl_elong_Ts_CS"/>
</dbReference>
<dbReference type="InterPro" id="IPR009060">
    <property type="entry name" value="UBA-like_sf"/>
</dbReference>
<dbReference type="NCBIfam" id="TIGR00116">
    <property type="entry name" value="tsf"/>
    <property type="match status" value="1"/>
</dbReference>
<dbReference type="PANTHER" id="PTHR11741">
    <property type="entry name" value="ELONGATION FACTOR TS"/>
    <property type="match status" value="1"/>
</dbReference>
<dbReference type="PANTHER" id="PTHR11741:SF0">
    <property type="entry name" value="ELONGATION FACTOR TS, MITOCHONDRIAL"/>
    <property type="match status" value="1"/>
</dbReference>
<dbReference type="Pfam" id="PF00889">
    <property type="entry name" value="EF_TS"/>
    <property type="match status" value="1"/>
</dbReference>
<dbReference type="SUPFAM" id="SSF54713">
    <property type="entry name" value="Elongation factor Ts (EF-Ts), dimerisation domain"/>
    <property type="match status" value="1"/>
</dbReference>
<dbReference type="SUPFAM" id="SSF46934">
    <property type="entry name" value="UBA-like"/>
    <property type="match status" value="1"/>
</dbReference>
<dbReference type="PROSITE" id="PS01126">
    <property type="entry name" value="EF_TS_1"/>
    <property type="match status" value="1"/>
</dbReference>
<dbReference type="PROSITE" id="PS01127">
    <property type="entry name" value="EF_TS_2"/>
    <property type="match status" value="1"/>
</dbReference>
<organism>
    <name type="scientific">Rhizobium rhizogenes (strain K84 / ATCC BAA-868)</name>
    <name type="common">Agrobacterium radiobacter</name>
    <dbReference type="NCBI Taxonomy" id="311403"/>
    <lineage>
        <taxon>Bacteria</taxon>
        <taxon>Pseudomonadati</taxon>
        <taxon>Pseudomonadota</taxon>
        <taxon>Alphaproteobacteria</taxon>
        <taxon>Hyphomicrobiales</taxon>
        <taxon>Rhizobiaceae</taxon>
        <taxon>Rhizobium/Agrobacterium group</taxon>
        <taxon>Rhizobium</taxon>
    </lineage>
</organism>
<gene>
    <name evidence="1" type="primary">tsf</name>
    <name type="ordered locus">Arad_2220</name>
</gene>
<feature type="chain" id="PRO_1000117551" description="Elongation factor Ts">
    <location>
        <begin position="1"/>
        <end position="308"/>
    </location>
</feature>
<feature type="region of interest" description="Involved in Mg(2+) ion dislocation from EF-Tu" evidence="1">
    <location>
        <begin position="80"/>
        <end position="83"/>
    </location>
</feature>
<comment type="function">
    <text evidence="1">Associates with the EF-Tu.GDP complex and induces the exchange of GDP to GTP. It remains bound to the aminoacyl-tRNA.EF-Tu.GTP complex up to the GTP hydrolysis stage on the ribosome.</text>
</comment>
<comment type="subcellular location">
    <subcellularLocation>
        <location evidence="1">Cytoplasm</location>
    </subcellularLocation>
</comment>
<comment type="similarity">
    <text evidence="1">Belongs to the EF-Ts family.</text>
</comment>
<accession>B9JEX1</accession>
<reference key="1">
    <citation type="journal article" date="2009" name="J. Bacteriol.">
        <title>Genome sequences of three Agrobacterium biovars help elucidate the evolution of multichromosome genomes in bacteria.</title>
        <authorList>
            <person name="Slater S.C."/>
            <person name="Goldman B.S."/>
            <person name="Goodner B."/>
            <person name="Setubal J.C."/>
            <person name="Farrand S.K."/>
            <person name="Nester E.W."/>
            <person name="Burr T.J."/>
            <person name="Banta L."/>
            <person name="Dickerman A.W."/>
            <person name="Paulsen I."/>
            <person name="Otten L."/>
            <person name="Suen G."/>
            <person name="Welch R."/>
            <person name="Almeida N.F."/>
            <person name="Arnold F."/>
            <person name="Burton O.T."/>
            <person name="Du Z."/>
            <person name="Ewing A."/>
            <person name="Godsy E."/>
            <person name="Heisel S."/>
            <person name="Houmiel K.L."/>
            <person name="Jhaveri J."/>
            <person name="Lu J."/>
            <person name="Miller N.M."/>
            <person name="Norton S."/>
            <person name="Chen Q."/>
            <person name="Phoolcharoen W."/>
            <person name="Ohlin V."/>
            <person name="Ondrusek D."/>
            <person name="Pride N."/>
            <person name="Stricklin S.L."/>
            <person name="Sun J."/>
            <person name="Wheeler C."/>
            <person name="Wilson L."/>
            <person name="Zhu H."/>
            <person name="Wood D.W."/>
        </authorList>
    </citation>
    <scope>NUCLEOTIDE SEQUENCE [LARGE SCALE GENOMIC DNA]</scope>
    <source>
        <strain>K84 / ATCC BAA-868</strain>
    </source>
</reference>